<feature type="chain" id="PRO_0000322560" description="GTP pyrophosphokinase rsh">
    <location>
        <begin position="1"/>
        <end position="750"/>
    </location>
</feature>
<feature type="domain" description="HD" evidence="2">
    <location>
        <begin position="45"/>
        <end position="144"/>
    </location>
</feature>
<feature type="domain" description="TGS" evidence="3">
    <location>
        <begin position="390"/>
        <end position="451"/>
    </location>
</feature>
<feature type="domain" description="ACT" evidence="1">
    <location>
        <begin position="676"/>
        <end position="750"/>
    </location>
</feature>
<feature type="region of interest" description="Disordered" evidence="4">
    <location>
        <begin position="587"/>
        <end position="613"/>
    </location>
</feature>
<reference key="1">
    <citation type="journal article" date="2002" name="Proc. Natl. Acad. Sci. U.S.A.">
        <title>The Brucella suis genome reveals fundamental similarities between animal and plant pathogens and symbionts.</title>
        <authorList>
            <person name="Paulsen I.T."/>
            <person name="Seshadri R."/>
            <person name="Nelson K.E."/>
            <person name="Eisen J.A."/>
            <person name="Heidelberg J.F."/>
            <person name="Read T.D."/>
            <person name="Dodson R.J."/>
            <person name="Umayam L.A."/>
            <person name="Brinkac L.M."/>
            <person name="Beanan M.J."/>
            <person name="Daugherty S.C."/>
            <person name="DeBoy R.T."/>
            <person name="Durkin A.S."/>
            <person name="Kolonay J.F."/>
            <person name="Madupu R."/>
            <person name="Nelson W.C."/>
            <person name="Ayodeji B."/>
            <person name="Kraul M."/>
            <person name="Shetty J."/>
            <person name="Malek J.A."/>
            <person name="Van Aken S.E."/>
            <person name="Riedmuller S."/>
            <person name="Tettelin H."/>
            <person name="Gill S.R."/>
            <person name="White O."/>
            <person name="Salzberg S.L."/>
            <person name="Hoover D.L."/>
            <person name="Lindler L.E."/>
            <person name="Halling S.M."/>
            <person name="Boyle S.M."/>
            <person name="Fraser C.M."/>
        </authorList>
    </citation>
    <scope>NUCLEOTIDE SEQUENCE [LARGE SCALE GENOMIC DNA]</scope>
    <source>
        <strain>1330</strain>
    </source>
</reference>
<reference key="2">
    <citation type="journal article" date="2011" name="J. Bacteriol.">
        <title>Revised genome sequence of Brucella suis 1330.</title>
        <authorList>
            <person name="Tae H."/>
            <person name="Shallom S."/>
            <person name="Settlage R."/>
            <person name="Preston D."/>
            <person name="Adams L.G."/>
            <person name="Garner H.R."/>
        </authorList>
    </citation>
    <scope>NUCLEOTIDE SEQUENCE [LARGE SCALE GENOMIC DNA]</scope>
    <source>
        <strain>1330</strain>
    </source>
</reference>
<reference key="3">
    <citation type="journal article" date="2006" name="Cell. Microbiol.">
        <title>The stringent response mediator Rsh is required for Brucella melitensis and Brucella suis virulence, and for expression of the type IV secretion system virB.</title>
        <authorList>
            <person name="Dozot M."/>
            <person name="Boigegrain R.-A."/>
            <person name="Delrue R.-M."/>
            <person name="Hallez R."/>
            <person name="Ouahrani-Bettache S."/>
            <person name="Danese I."/>
            <person name="Letesson J.-J."/>
            <person name="De Bolle X."/>
            <person name="Koehler S."/>
        </authorList>
    </citation>
    <scope>FUNCTION IN STRINGENT RESPONSE</scope>
    <scope>DISRUPTION PHENOTYPE</scope>
    <source>
        <strain>1330</strain>
    </source>
</reference>
<organism>
    <name type="scientific">Brucella suis biovar 1 (strain 1330)</name>
    <dbReference type="NCBI Taxonomy" id="204722"/>
    <lineage>
        <taxon>Bacteria</taxon>
        <taxon>Pseudomonadati</taxon>
        <taxon>Pseudomonadota</taxon>
        <taxon>Alphaproteobacteria</taxon>
        <taxon>Hyphomicrobiales</taxon>
        <taxon>Brucellaceae</taxon>
        <taxon>Brucella/Ochrobactrum group</taxon>
        <taxon>Brucella</taxon>
    </lineage>
</organism>
<comment type="function">
    <text evidence="5">Functions as a (p)ppGpp synthase. In eubacteria ppGpp (guanosine 3'-diphosphate 5'-diphosphate) is a mediator of the stringent response that coordinates a variety of cellular activities in response to changes in nutritional abundance. It is necessary for persistence in mice, essential for intracellular growth of Brucella and required for expression of the type IV secretion system VirB and therefore plays a role in adaptation of Brucella to its intracellular host environment.</text>
</comment>
<comment type="catalytic activity">
    <reaction>
        <text>GTP + ATP = guanosine 3'-diphosphate 5'-triphosphate + AMP</text>
        <dbReference type="Rhea" id="RHEA:22088"/>
        <dbReference type="ChEBI" id="CHEBI:30616"/>
        <dbReference type="ChEBI" id="CHEBI:37565"/>
        <dbReference type="ChEBI" id="CHEBI:142410"/>
        <dbReference type="ChEBI" id="CHEBI:456215"/>
        <dbReference type="EC" id="2.7.6.5"/>
    </reaction>
</comment>
<comment type="disruption phenotype">
    <text evidence="5">Cells show morphological abnormalities such as branching and swelling forms during vegetative growth. It is unable to persist during stationary phase, presumably because of nutrient limitation occurring during this growth phase. It shows an important growth defect in human HeLa cells and in ovine macrophages MOCL3. At four weeks post infection the number of viable bacteria (deletion mutant) in mouse spleen is markedly reduced compared to the wild-type. The deletion mutant shows very low levels or absence of VirB at all time points of growth.</text>
</comment>
<comment type="similarity">
    <text evidence="6">Belongs to the RelA/SpoT family.</text>
</comment>
<accession>Q8CY42</accession>
<accession>G0K7Z3</accession>
<name>RSH_BRUSU</name>
<sequence>MMRQYELVERVQRYKPDVNEALLNKAYVYAMQKHGSQKRASGDPYFSHPLEVAAILTDMHLDEATIAIALLHDTIEDTTATRQEIDQLFGPEIGKLVEGLTKLKKLDLVSKKAVQAENLRKLLLAISEDVRVLLVKLADRLHNMRTLGVMCEDKRLRIAEETMDIYAPLAGRMGMQDMREELEELAFRYINPDAWRAVTDRLAELLEKNRGLLQKIETDLSEIFEKNGIKASVKSRQKKPWSVFRKMETKGLSFEQLSDIFGFRVMVDTVQDCYRALGLIHTTWSMVPGRFKDYISTPKQNDYRSIHTTIIGPSRQRIELQIRTREMDEIAEFGVAAHSIYKDRGSANNPHKISTETNAYAWLRQTIEQLSEGDNPEEFLEHTKLELFQDQVFCFTPKGRLIALPRGATPIDFAYAVHTDIGDSCVGAKVNGRIMPLMTELKNGDEVDIIRSKAQVPPAAWESLVATGKARAAIRRATRSAVRKQYSGLGMRILERAFERAGKPFSKDILKPGLPRLARKDVEDVLAAVGRGELPSTDVVKAVYPDYQDTRVTTQNNPAKAGEKGWFNIQNAAGMIFKVPEGGEGAAAKVDPAATTPKPGKRALPIRGTNPDLPVRFAPEGAVPGDRIVGILQPGAGITIYPIQSPALTAYDDQPERWIDVRWDIDDQMSERFPARISVSAINSPGSLAKIAQIAAANDANIHNLSMVRTAPDFTEMIIDVEVWDLKHLNRIISQLKESASVSSAKRVNG</sequence>
<evidence type="ECO:0000255" key="1">
    <source>
        <dbReference type="PROSITE-ProRule" id="PRU01007"/>
    </source>
</evidence>
<evidence type="ECO:0000255" key="2">
    <source>
        <dbReference type="PROSITE-ProRule" id="PRU01175"/>
    </source>
</evidence>
<evidence type="ECO:0000255" key="3">
    <source>
        <dbReference type="PROSITE-ProRule" id="PRU01228"/>
    </source>
</evidence>
<evidence type="ECO:0000256" key="4">
    <source>
        <dbReference type="SAM" id="MobiDB-lite"/>
    </source>
</evidence>
<evidence type="ECO:0000269" key="5">
    <source>
    </source>
</evidence>
<evidence type="ECO:0000305" key="6"/>
<dbReference type="EC" id="2.7.6.5"/>
<dbReference type="EMBL" id="AE014291">
    <property type="protein sequence ID" value="AAN29581.1"/>
    <property type="molecule type" value="Genomic_DNA"/>
</dbReference>
<dbReference type="EMBL" id="CP002997">
    <property type="protein sequence ID" value="AEM17998.1"/>
    <property type="molecule type" value="Genomic_DNA"/>
</dbReference>
<dbReference type="RefSeq" id="WP_004690700.1">
    <property type="nucleotide sequence ID" value="NZ_KN046804.1"/>
</dbReference>
<dbReference type="SMR" id="Q8CY42"/>
<dbReference type="GeneID" id="45051735"/>
<dbReference type="KEGG" id="bms:BR0652"/>
<dbReference type="KEGG" id="bsi:BS1330_I0648"/>
<dbReference type="PATRIC" id="fig|204722.21.peg.1526"/>
<dbReference type="HOGENOM" id="CLU_012300_3_0_5"/>
<dbReference type="PhylomeDB" id="Q8CY42"/>
<dbReference type="PRO" id="PR:Q8CY42"/>
<dbReference type="Proteomes" id="UP000007104">
    <property type="component" value="Chromosome I"/>
</dbReference>
<dbReference type="GO" id="GO:0005886">
    <property type="term" value="C:plasma membrane"/>
    <property type="evidence" value="ECO:0007669"/>
    <property type="project" value="TreeGrafter"/>
</dbReference>
<dbReference type="GO" id="GO:0005524">
    <property type="term" value="F:ATP binding"/>
    <property type="evidence" value="ECO:0007669"/>
    <property type="project" value="UniProtKB-KW"/>
</dbReference>
<dbReference type="GO" id="GO:0005525">
    <property type="term" value="F:GTP binding"/>
    <property type="evidence" value="ECO:0007669"/>
    <property type="project" value="UniProtKB-KW"/>
</dbReference>
<dbReference type="GO" id="GO:0008728">
    <property type="term" value="F:GTP diphosphokinase activity"/>
    <property type="evidence" value="ECO:0007669"/>
    <property type="project" value="UniProtKB-EC"/>
</dbReference>
<dbReference type="GO" id="GO:0008893">
    <property type="term" value="F:guanosine-3',5'-bis(diphosphate) 3'-diphosphatase activity"/>
    <property type="evidence" value="ECO:0007669"/>
    <property type="project" value="TreeGrafter"/>
</dbReference>
<dbReference type="GO" id="GO:0016301">
    <property type="term" value="F:kinase activity"/>
    <property type="evidence" value="ECO:0007669"/>
    <property type="project" value="UniProtKB-KW"/>
</dbReference>
<dbReference type="GO" id="GO:0015969">
    <property type="term" value="P:guanosine tetraphosphate metabolic process"/>
    <property type="evidence" value="ECO:0007669"/>
    <property type="project" value="InterPro"/>
</dbReference>
<dbReference type="GO" id="GO:0042594">
    <property type="term" value="P:response to starvation"/>
    <property type="evidence" value="ECO:0007669"/>
    <property type="project" value="TreeGrafter"/>
</dbReference>
<dbReference type="CDD" id="cd04876">
    <property type="entry name" value="ACT_RelA-SpoT"/>
    <property type="match status" value="1"/>
</dbReference>
<dbReference type="CDD" id="cd00077">
    <property type="entry name" value="HDc"/>
    <property type="match status" value="1"/>
</dbReference>
<dbReference type="CDD" id="cd05399">
    <property type="entry name" value="NT_Rel-Spo_like"/>
    <property type="match status" value="1"/>
</dbReference>
<dbReference type="CDD" id="cd01668">
    <property type="entry name" value="TGS_RSH"/>
    <property type="match status" value="1"/>
</dbReference>
<dbReference type="FunFam" id="3.10.20.30:FF:000002">
    <property type="entry name" value="GTP pyrophosphokinase (RelA/SpoT)"/>
    <property type="match status" value="1"/>
</dbReference>
<dbReference type="FunFam" id="1.10.3210.10:FF:000001">
    <property type="entry name" value="GTP pyrophosphokinase RelA"/>
    <property type="match status" value="1"/>
</dbReference>
<dbReference type="FunFam" id="3.30.460.10:FF:000001">
    <property type="entry name" value="GTP pyrophosphokinase RelA"/>
    <property type="match status" value="1"/>
</dbReference>
<dbReference type="Gene3D" id="3.10.20.30">
    <property type="match status" value="1"/>
</dbReference>
<dbReference type="Gene3D" id="3.30.70.260">
    <property type="match status" value="1"/>
</dbReference>
<dbReference type="Gene3D" id="3.30.460.10">
    <property type="entry name" value="Beta Polymerase, domain 2"/>
    <property type="match status" value="1"/>
</dbReference>
<dbReference type="Gene3D" id="1.10.3210.10">
    <property type="entry name" value="Hypothetical protein af1432"/>
    <property type="match status" value="1"/>
</dbReference>
<dbReference type="InterPro" id="IPR045865">
    <property type="entry name" value="ACT-like_dom_sf"/>
</dbReference>
<dbReference type="InterPro" id="IPR002912">
    <property type="entry name" value="ACT_dom"/>
</dbReference>
<dbReference type="InterPro" id="IPR012675">
    <property type="entry name" value="Beta-grasp_dom_sf"/>
</dbReference>
<dbReference type="InterPro" id="IPR003607">
    <property type="entry name" value="HD/PDEase_dom"/>
</dbReference>
<dbReference type="InterPro" id="IPR006674">
    <property type="entry name" value="HD_domain"/>
</dbReference>
<dbReference type="InterPro" id="IPR043519">
    <property type="entry name" value="NT_sf"/>
</dbReference>
<dbReference type="InterPro" id="IPR004811">
    <property type="entry name" value="RelA/Spo_fam"/>
</dbReference>
<dbReference type="InterPro" id="IPR045600">
    <property type="entry name" value="RelA/SpoT_AH_RIS"/>
</dbReference>
<dbReference type="InterPro" id="IPR007685">
    <property type="entry name" value="RelA_SpoT"/>
</dbReference>
<dbReference type="InterPro" id="IPR004095">
    <property type="entry name" value="TGS"/>
</dbReference>
<dbReference type="InterPro" id="IPR012676">
    <property type="entry name" value="TGS-like"/>
</dbReference>
<dbReference type="InterPro" id="IPR033655">
    <property type="entry name" value="TGS_RelA/SpoT"/>
</dbReference>
<dbReference type="NCBIfam" id="TIGR00691">
    <property type="entry name" value="spoT_relA"/>
    <property type="match status" value="1"/>
</dbReference>
<dbReference type="PANTHER" id="PTHR21262:SF36">
    <property type="entry name" value="BIFUNCTIONAL (P)PPGPP SYNTHASE_HYDROLASE SPOT"/>
    <property type="match status" value="1"/>
</dbReference>
<dbReference type="PANTHER" id="PTHR21262">
    <property type="entry name" value="GUANOSINE-3',5'-BIS DIPHOSPHATE 3'-PYROPHOSPHOHYDROLASE"/>
    <property type="match status" value="1"/>
</dbReference>
<dbReference type="Pfam" id="PF13291">
    <property type="entry name" value="ACT_4"/>
    <property type="match status" value="1"/>
</dbReference>
<dbReference type="Pfam" id="PF13328">
    <property type="entry name" value="HD_4"/>
    <property type="match status" value="1"/>
</dbReference>
<dbReference type="Pfam" id="PF19296">
    <property type="entry name" value="RelA_AH_RIS"/>
    <property type="match status" value="1"/>
</dbReference>
<dbReference type="Pfam" id="PF04607">
    <property type="entry name" value="RelA_SpoT"/>
    <property type="match status" value="1"/>
</dbReference>
<dbReference type="Pfam" id="PF02824">
    <property type="entry name" value="TGS"/>
    <property type="match status" value="1"/>
</dbReference>
<dbReference type="SMART" id="SM00471">
    <property type="entry name" value="HDc"/>
    <property type="match status" value="1"/>
</dbReference>
<dbReference type="SMART" id="SM00954">
    <property type="entry name" value="RelA_SpoT"/>
    <property type="match status" value="1"/>
</dbReference>
<dbReference type="SUPFAM" id="SSF55021">
    <property type="entry name" value="ACT-like"/>
    <property type="match status" value="1"/>
</dbReference>
<dbReference type="SUPFAM" id="SSF109604">
    <property type="entry name" value="HD-domain/PDEase-like"/>
    <property type="match status" value="1"/>
</dbReference>
<dbReference type="SUPFAM" id="SSF81301">
    <property type="entry name" value="Nucleotidyltransferase"/>
    <property type="match status" value="1"/>
</dbReference>
<dbReference type="SUPFAM" id="SSF81271">
    <property type="entry name" value="TGS-like"/>
    <property type="match status" value="1"/>
</dbReference>
<dbReference type="PROSITE" id="PS51671">
    <property type="entry name" value="ACT"/>
    <property type="match status" value="1"/>
</dbReference>
<dbReference type="PROSITE" id="PS51831">
    <property type="entry name" value="HD"/>
    <property type="match status" value="1"/>
</dbReference>
<dbReference type="PROSITE" id="PS51880">
    <property type="entry name" value="TGS"/>
    <property type="match status" value="1"/>
</dbReference>
<keyword id="KW-0067">ATP-binding</keyword>
<keyword id="KW-0342">GTP-binding</keyword>
<keyword id="KW-0418">Kinase</keyword>
<keyword id="KW-0547">Nucleotide-binding</keyword>
<keyword id="KW-0808">Transferase</keyword>
<gene>
    <name type="primary">rsh</name>
    <name type="ordered locus">BR0652</name>
    <name type="ordered locus">BS1330_I0648</name>
</gene>
<proteinExistence type="evidence at protein level"/>
<protein>
    <recommendedName>
        <fullName>GTP pyrophosphokinase rsh</fullName>
        <ecNumber>2.7.6.5</ecNumber>
    </recommendedName>
    <alternativeName>
        <fullName>(p)ppGpp synthase</fullName>
    </alternativeName>
    <alternativeName>
        <fullName>ATP:GTP 3'-pyrophosphotransferase</fullName>
    </alternativeName>
</protein>